<accession>Q04E43</accession>
<sequence length="230" mass="24172">MVKKHSKKYLAAAEKIDHSKKYSLADAATLVKDISFTNFDSNVEVVFDLNVDTTKADQQLRGAIVLPNGSGNPKTVVVFADGEKAKDATQAGADFVGTDDLIQKVQSGWTDFDVAIATPDQMAKVGRVGRALGPKGLMPNPKEGTVTMDVTKAVSDAKGGQVTYRTDKNGNVAVPVGKVSFDSDKLAENIKSVSSTILGARPSTVKGTYVLSAHLASTMGPGVELDVSSL</sequence>
<gene>
    <name evidence="1" type="primary">rplA</name>
    <name type="ordered locus">OEOE_1418</name>
</gene>
<dbReference type="EMBL" id="CP000411">
    <property type="protein sequence ID" value="ABJ57279.1"/>
    <property type="molecule type" value="Genomic_DNA"/>
</dbReference>
<dbReference type="RefSeq" id="WP_002822168.1">
    <property type="nucleotide sequence ID" value="NC_008528.1"/>
</dbReference>
<dbReference type="SMR" id="Q04E43"/>
<dbReference type="STRING" id="203123.OEOE_1418"/>
<dbReference type="KEGG" id="ooe:OEOE_1418"/>
<dbReference type="PATRIC" id="fig|203123.7.peg.1433"/>
<dbReference type="eggNOG" id="COG0081">
    <property type="taxonomic scope" value="Bacteria"/>
</dbReference>
<dbReference type="HOGENOM" id="CLU_062853_0_0_9"/>
<dbReference type="Proteomes" id="UP000000774">
    <property type="component" value="Chromosome"/>
</dbReference>
<dbReference type="GO" id="GO:0015934">
    <property type="term" value="C:large ribosomal subunit"/>
    <property type="evidence" value="ECO:0007669"/>
    <property type="project" value="InterPro"/>
</dbReference>
<dbReference type="GO" id="GO:0019843">
    <property type="term" value="F:rRNA binding"/>
    <property type="evidence" value="ECO:0007669"/>
    <property type="project" value="UniProtKB-UniRule"/>
</dbReference>
<dbReference type="GO" id="GO:0003735">
    <property type="term" value="F:structural constituent of ribosome"/>
    <property type="evidence" value="ECO:0007669"/>
    <property type="project" value="InterPro"/>
</dbReference>
<dbReference type="GO" id="GO:0000049">
    <property type="term" value="F:tRNA binding"/>
    <property type="evidence" value="ECO:0007669"/>
    <property type="project" value="UniProtKB-KW"/>
</dbReference>
<dbReference type="GO" id="GO:0006417">
    <property type="term" value="P:regulation of translation"/>
    <property type="evidence" value="ECO:0007669"/>
    <property type="project" value="UniProtKB-KW"/>
</dbReference>
<dbReference type="GO" id="GO:0006412">
    <property type="term" value="P:translation"/>
    <property type="evidence" value="ECO:0007669"/>
    <property type="project" value="UniProtKB-UniRule"/>
</dbReference>
<dbReference type="CDD" id="cd00403">
    <property type="entry name" value="Ribosomal_L1"/>
    <property type="match status" value="1"/>
</dbReference>
<dbReference type="FunFam" id="3.40.50.790:FF:000001">
    <property type="entry name" value="50S ribosomal protein L1"/>
    <property type="match status" value="1"/>
</dbReference>
<dbReference type="Gene3D" id="3.30.190.20">
    <property type="match status" value="1"/>
</dbReference>
<dbReference type="Gene3D" id="3.40.50.790">
    <property type="match status" value="1"/>
</dbReference>
<dbReference type="HAMAP" id="MF_01318_B">
    <property type="entry name" value="Ribosomal_uL1_B"/>
    <property type="match status" value="1"/>
</dbReference>
<dbReference type="InterPro" id="IPR005878">
    <property type="entry name" value="Ribosom_uL1_bac-type"/>
</dbReference>
<dbReference type="InterPro" id="IPR002143">
    <property type="entry name" value="Ribosomal_uL1"/>
</dbReference>
<dbReference type="InterPro" id="IPR023674">
    <property type="entry name" value="Ribosomal_uL1-like"/>
</dbReference>
<dbReference type="InterPro" id="IPR028364">
    <property type="entry name" value="Ribosomal_uL1/biogenesis"/>
</dbReference>
<dbReference type="InterPro" id="IPR016095">
    <property type="entry name" value="Ribosomal_uL1_3-a/b-sand"/>
</dbReference>
<dbReference type="InterPro" id="IPR023673">
    <property type="entry name" value="Ribosomal_uL1_CS"/>
</dbReference>
<dbReference type="NCBIfam" id="TIGR01169">
    <property type="entry name" value="rplA_bact"/>
    <property type="match status" value="1"/>
</dbReference>
<dbReference type="PANTHER" id="PTHR36427">
    <property type="entry name" value="54S RIBOSOMAL PROTEIN L1, MITOCHONDRIAL"/>
    <property type="match status" value="1"/>
</dbReference>
<dbReference type="PANTHER" id="PTHR36427:SF3">
    <property type="entry name" value="LARGE RIBOSOMAL SUBUNIT PROTEIN UL1M"/>
    <property type="match status" value="1"/>
</dbReference>
<dbReference type="Pfam" id="PF00687">
    <property type="entry name" value="Ribosomal_L1"/>
    <property type="match status" value="1"/>
</dbReference>
<dbReference type="PIRSF" id="PIRSF002155">
    <property type="entry name" value="Ribosomal_L1"/>
    <property type="match status" value="1"/>
</dbReference>
<dbReference type="SUPFAM" id="SSF56808">
    <property type="entry name" value="Ribosomal protein L1"/>
    <property type="match status" value="1"/>
</dbReference>
<dbReference type="PROSITE" id="PS01199">
    <property type="entry name" value="RIBOSOMAL_L1"/>
    <property type="match status" value="1"/>
</dbReference>
<reference key="1">
    <citation type="journal article" date="2006" name="Proc. Natl. Acad. Sci. U.S.A.">
        <title>Comparative genomics of the lactic acid bacteria.</title>
        <authorList>
            <person name="Makarova K.S."/>
            <person name="Slesarev A."/>
            <person name="Wolf Y.I."/>
            <person name="Sorokin A."/>
            <person name="Mirkin B."/>
            <person name="Koonin E.V."/>
            <person name="Pavlov A."/>
            <person name="Pavlova N."/>
            <person name="Karamychev V."/>
            <person name="Polouchine N."/>
            <person name="Shakhova V."/>
            <person name="Grigoriev I."/>
            <person name="Lou Y."/>
            <person name="Rohksar D."/>
            <person name="Lucas S."/>
            <person name="Huang K."/>
            <person name="Goodstein D.M."/>
            <person name="Hawkins T."/>
            <person name="Plengvidhya V."/>
            <person name="Welker D."/>
            <person name="Hughes J."/>
            <person name="Goh Y."/>
            <person name="Benson A."/>
            <person name="Baldwin K."/>
            <person name="Lee J.-H."/>
            <person name="Diaz-Muniz I."/>
            <person name="Dosti B."/>
            <person name="Smeianov V."/>
            <person name="Wechter W."/>
            <person name="Barabote R."/>
            <person name="Lorca G."/>
            <person name="Altermann E."/>
            <person name="Barrangou R."/>
            <person name="Ganesan B."/>
            <person name="Xie Y."/>
            <person name="Rawsthorne H."/>
            <person name="Tamir D."/>
            <person name="Parker C."/>
            <person name="Breidt F."/>
            <person name="Broadbent J.R."/>
            <person name="Hutkins R."/>
            <person name="O'Sullivan D."/>
            <person name="Steele J."/>
            <person name="Unlu G."/>
            <person name="Saier M.H. Jr."/>
            <person name="Klaenhammer T."/>
            <person name="Richardson P."/>
            <person name="Kozyavkin S."/>
            <person name="Weimer B.C."/>
            <person name="Mills D.A."/>
        </authorList>
    </citation>
    <scope>NUCLEOTIDE SEQUENCE [LARGE SCALE GENOMIC DNA]</scope>
    <source>
        <strain>ATCC BAA-331 / PSU-1</strain>
    </source>
</reference>
<comment type="function">
    <text evidence="1">Binds directly to 23S rRNA. The L1 stalk is quite mobile in the ribosome, and is involved in E site tRNA release.</text>
</comment>
<comment type="function">
    <text evidence="1">Protein L1 is also a translational repressor protein, it controls the translation of the L11 operon by binding to its mRNA.</text>
</comment>
<comment type="subunit">
    <text evidence="1">Part of the 50S ribosomal subunit.</text>
</comment>
<comment type="similarity">
    <text evidence="1">Belongs to the universal ribosomal protein uL1 family.</text>
</comment>
<evidence type="ECO:0000255" key="1">
    <source>
        <dbReference type="HAMAP-Rule" id="MF_01318"/>
    </source>
</evidence>
<evidence type="ECO:0000305" key="2"/>
<organism>
    <name type="scientific">Oenococcus oeni (strain ATCC BAA-331 / PSU-1)</name>
    <dbReference type="NCBI Taxonomy" id="203123"/>
    <lineage>
        <taxon>Bacteria</taxon>
        <taxon>Bacillati</taxon>
        <taxon>Bacillota</taxon>
        <taxon>Bacilli</taxon>
        <taxon>Lactobacillales</taxon>
        <taxon>Lactobacillaceae</taxon>
        <taxon>Oenococcus</taxon>
    </lineage>
</organism>
<proteinExistence type="inferred from homology"/>
<keyword id="KW-1185">Reference proteome</keyword>
<keyword id="KW-0678">Repressor</keyword>
<keyword id="KW-0687">Ribonucleoprotein</keyword>
<keyword id="KW-0689">Ribosomal protein</keyword>
<keyword id="KW-0694">RNA-binding</keyword>
<keyword id="KW-0699">rRNA-binding</keyword>
<keyword id="KW-0810">Translation regulation</keyword>
<keyword id="KW-0820">tRNA-binding</keyword>
<protein>
    <recommendedName>
        <fullName evidence="1">Large ribosomal subunit protein uL1</fullName>
    </recommendedName>
    <alternativeName>
        <fullName evidence="2">50S ribosomal protein L1</fullName>
    </alternativeName>
</protein>
<feature type="chain" id="PRO_0000308064" description="Large ribosomal subunit protein uL1">
    <location>
        <begin position="1"/>
        <end position="230"/>
    </location>
</feature>
<name>RL1_OENOB</name>